<feature type="chain" id="PRO_0000232369" description="Pre-mRNA-splicing ATP-dependent RNA helicase prp28">
    <location>
        <begin position="1"/>
        <end position="796"/>
    </location>
</feature>
<feature type="domain" description="Helicase ATP-binding" evidence="2">
    <location>
        <begin position="395"/>
        <end position="595"/>
    </location>
</feature>
<feature type="domain" description="Helicase C-terminal" evidence="3">
    <location>
        <begin position="606"/>
        <end position="769"/>
    </location>
</feature>
<feature type="region of interest" description="Disordered" evidence="4">
    <location>
        <begin position="1"/>
        <end position="81"/>
    </location>
</feature>
<feature type="region of interest" description="Disordered" evidence="4">
    <location>
        <begin position="113"/>
        <end position="211"/>
    </location>
</feature>
<feature type="region of interest" description="Disordered" evidence="4">
    <location>
        <begin position="760"/>
        <end position="796"/>
    </location>
</feature>
<feature type="short sequence motif" description="Q motif">
    <location>
        <begin position="364"/>
        <end position="392"/>
    </location>
</feature>
<feature type="short sequence motif" description="DEAD box">
    <location>
        <begin position="523"/>
        <end position="526"/>
    </location>
</feature>
<feature type="compositionally biased region" description="Pro residues" evidence="4">
    <location>
        <begin position="15"/>
        <end position="60"/>
    </location>
</feature>
<feature type="compositionally biased region" description="Basic and acidic residues" evidence="4">
    <location>
        <begin position="113"/>
        <end position="134"/>
    </location>
</feature>
<feature type="compositionally biased region" description="Basic and acidic residues" evidence="4">
    <location>
        <begin position="761"/>
        <end position="771"/>
    </location>
</feature>
<feature type="compositionally biased region" description="Polar residues" evidence="4">
    <location>
        <begin position="786"/>
        <end position="796"/>
    </location>
</feature>
<feature type="binding site" evidence="2">
    <location>
        <begin position="408"/>
        <end position="415"/>
    </location>
    <ligand>
        <name>ATP</name>
        <dbReference type="ChEBI" id="CHEBI:30616"/>
    </ligand>
</feature>
<name>PRP28_ASPFU</name>
<proteinExistence type="inferred from homology"/>
<comment type="function">
    <text evidence="1">ATP-dependent RNA helicase involved in mRNA splicing. May destabilize the U1/5'-splice site duplex to permit an effective competition for the 5'-splice site by the U6 snRNA, resulting in the switch between U1 and U6 at the 5'-splice site. May also act to unwind the U4/U6 base-pairing interaction in the U4/U6/U5 snRNP, facilitating the first covalent step of splicing (By similarity).</text>
</comment>
<comment type="catalytic activity">
    <reaction>
        <text>ATP + H2O = ADP + phosphate + H(+)</text>
        <dbReference type="Rhea" id="RHEA:13065"/>
        <dbReference type="ChEBI" id="CHEBI:15377"/>
        <dbReference type="ChEBI" id="CHEBI:15378"/>
        <dbReference type="ChEBI" id="CHEBI:30616"/>
        <dbReference type="ChEBI" id="CHEBI:43474"/>
        <dbReference type="ChEBI" id="CHEBI:456216"/>
        <dbReference type="EC" id="3.6.4.13"/>
    </reaction>
</comment>
<comment type="subunit">
    <text evidence="1">Component of the U5 snRNP complex.</text>
</comment>
<comment type="subcellular location">
    <subcellularLocation>
        <location evidence="1">Cytoplasm</location>
    </subcellularLocation>
    <subcellularLocation>
        <location evidence="1">Nucleus</location>
    </subcellularLocation>
</comment>
<comment type="domain">
    <text>The Q motif is unique to and characteristic of the DEAD box family of RNA helicases and controls ATP binding and hydrolysis.</text>
</comment>
<comment type="similarity">
    <text evidence="5">Belongs to the DEAD box helicase family. DDX23/PRP28 subfamily.</text>
</comment>
<protein>
    <recommendedName>
        <fullName>Pre-mRNA-splicing ATP-dependent RNA helicase prp28</fullName>
        <ecNumber>3.6.4.13</ecNumber>
    </recommendedName>
</protein>
<organism>
    <name type="scientific">Aspergillus fumigatus (strain ATCC MYA-4609 / CBS 101355 / FGSC A1100 / Af293)</name>
    <name type="common">Neosartorya fumigata</name>
    <dbReference type="NCBI Taxonomy" id="330879"/>
    <lineage>
        <taxon>Eukaryota</taxon>
        <taxon>Fungi</taxon>
        <taxon>Dikarya</taxon>
        <taxon>Ascomycota</taxon>
        <taxon>Pezizomycotina</taxon>
        <taxon>Eurotiomycetes</taxon>
        <taxon>Eurotiomycetidae</taxon>
        <taxon>Eurotiales</taxon>
        <taxon>Aspergillaceae</taxon>
        <taxon>Aspergillus</taxon>
        <taxon>Aspergillus subgen. Fumigati</taxon>
    </lineage>
</organism>
<evidence type="ECO:0000250" key="1"/>
<evidence type="ECO:0000255" key="2">
    <source>
        <dbReference type="PROSITE-ProRule" id="PRU00541"/>
    </source>
</evidence>
<evidence type="ECO:0000255" key="3">
    <source>
        <dbReference type="PROSITE-ProRule" id="PRU00542"/>
    </source>
</evidence>
<evidence type="ECO:0000256" key="4">
    <source>
        <dbReference type="SAM" id="MobiDB-lite"/>
    </source>
</evidence>
<evidence type="ECO:0000305" key="5"/>
<keyword id="KW-0067">ATP-binding</keyword>
<keyword id="KW-0963">Cytoplasm</keyword>
<keyword id="KW-0347">Helicase</keyword>
<keyword id="KW-0378">Hydrolase</keyword>
<keyword id="KW-0507">mRNA processing</keyword>
<keyword id="KW-0508">mRNA splicing</keyword>
<keyword id="KW-0547">Nucleotide-binding</keyword>
<keyword id="KW-0539">Nucleus</keyword>
<keyword id="KW-1185">Reference proteome</keyword>
<sequence>MDGIISNGSPGAPVTQPPPEPLERPPTPPPPPPEDSAAPPPPPDTSVPPPPPEDAPPAPPPEKKKKVGWGAKRPAATPLSVEELVRKKREADAAAAKPKFLSKAERERIALEKRAKEVEAGRRLKLDPFTDGTDRSGTQSPSVYPETPNGDERSIPTGPRAMRNSEVPTGPAAMRNKTYDMSPPPPPKAMSFSLTDGKGDSKRQAEEDEAAAQAALIKQKYMGTEKTSSFSAKKKRKRTTDRKFNFEWNAEEDTSGDYNPLYQQRHEANFYGRGRLAGFGDDVADTLAQKYARALEDRDREAGSIRAREILEMERRRREESTRNQLDKHWSEKKLEHMRERDWRIFKEDFNISTKGGSVPNPMRSWEESGLPKRLLELVDQVGYKEPTPIQRAAIPIALQSRDLIGVAVTGSGKTASFLLPLLVYISELPRIDEFEWRKNDGPYAIVLAPTRELAQQIEIEARKFTQPLGFNVVSIVGGHSFEEQAYSLRNGAEIIIATPGRLVDCIERRLLVLSQCCYVIMDEADRMIDLGFEEPVNKILDALPVTNEKPDTEEAENSAAMRSHRYRQTMMYTATMPSAVERIARKYLRRPAIVTIGSAGEAVDTVEQRVEMIAGEDKRKKRLADILSSGEFRPPIIVFVNIKRNCDAIAREIKQMGFSSVTLHGSKTQEQREAALASVRNGSTDVLVATDLAGRGIDVPDVSLVVNFNMANSIESYTHRIGRTGRAGKSGVAITFLGNEDADVMYDLKQMLMKSPISRVPEELRKHEAAQSKPNRGLAKKSDDSSGFGTKSGWQ</sequence>
<reference key="1">
    <citation type="journal article" date="2005" name="Nature">
        <title>Genomic sequence of the pathogenic and allergenic filamentous fungus Aspergillus fumigatus.</title>
        <authorList>
            <person name="Nierman W.C."/>
            <person name="Pain A."/>
            <person name="Anderson M.J."/>
            <person name="Wortman J.R."/>
            <person name="Kim H.S."/>
            <person name="Arroyo J."/>
            <person name="Berriman M."/>
            <person name="Abe K."/>
            <person name="Archer D.B."/>
            <person name="Bermejo C."/>
            <person name="Bennett J.W."/>
            <person name="Bowyer P."/>
            <person name="Chen D."/>
            <person name="Collins M."/>
            <person name="Coulsen R."/>
            <person name="Davies R."/>
            <person name="Dyer P.S."/>
            <person name="Farman M.L."/>
            <person name="Fedorova N."/>
            <person name="Fedorova N.D."/>
            <person name="Feldblyum T.V."/>
            <person name="Fischer R."/>
            <person name="Fosker N."/>
            <person name="Fraser A."/>
            <person name="Garcia J.L."/>
            <person name="Garcia M.J."/>
            <person name="Goble A."/>
            <person name="Goldman G.H."/>
            <person name="Gomi K."/>
            <person name="Griffith-Jones S."/>
            <person name="Gwilliam R."/>
            <person name="Haas B.J."/>
            <person name="Haas H."/>
            <person name="Harris D.E."/>
            <person name="Horiuchi H."/>
            <person name="Huang J."/>
            <person name="Humphray S."/>
            <person name="Jimenez J."/>
            <person name="Keller N."/>
            <person name="Khouri H."/>
            <person name="Kitamoto K."/>
            <person name="Kobayashi T."/>
            <person name="Konzack S."/>
            <person name="Kulkarni R."/>
            <person name="Kumagai T."/>
            <person name="Lafton A."/>
            <person name="Latge J.-P."/>
            <person name="Li W."/>
            <person name="Lord A."/>
            <person name="Lu C."/>
            <person name="Majoros W.H."/>
            <person name="May G.S."/>
            <person name="Miller B.L."/>
            <person name="Mohamoud Y."/>
            <person name="Molina M."/>
            <person name="Monod M."/>
            <person name="Mouyna I."/>
            <person name="Mulligan S."/>
            <person name="Murphy L.D."/>
            <person name="O'Neil S."/>
            <person name="Paulsen I."/>
            <person name="Penalva M.A."/>
            <person name="Pertea M."/>
            <person name="Price C."/>
            <person name="Pritchard B.L."/>
            <person name="Quail M.A."/>
            <person name="Rabbinowitsch E."/>
            <person name="Rawlins N."/>
            <person name="Rajandream M.A."/>
            <person name="Reichard U."/>
            <person name="Renauld H."/>
            <person name="Robson G.D."/>
            <person name="Rodriguez de Cordoba S."/>
            <person name="Rodriguez-Pena J.M."/>
            <person name="Ronning C.M."/>
            <person name="Rutter S."/>
            <person name="Salzberg S.L."/>
            <person name="Sanchez M."/>
            <person name="Sanchez-Ferrero J.C."/>
            <person name="Saunders D."/>
            <person name="Seeger K."/>
            <person name="Squares R."/>
            <person name="Squares S."/>
            <person name="Takeuchi M."/>
            <person name="Tekaia F."/>
            <person name="Turner G."/>
            <person name="Vazquez de Aldana C.R."/>
            <person name="Weidman J."/>
            <person name="White O."/>
            <person name="Woodward J.R."/>
            <person name="Yu J.-H."/>
            <person name="Fraser C.M."/>
            <person name="Galagan J.E."/>
            <person name="Asai K."/>
            <person name="Machida M."/>
            <person name="Hall N."/>
            <person name="Barrell B.G."/>
            <person name="Denning D.W."/>
        </authorList>
    </citation>
    <scope>NUCLEOTIDE SEQUENCE [LARGE SCALE GENOMIC DNA]</scope>
    <source>
        <strain>ATCC MYA-4609 / CBS 101355 / FGSC A1100 / Af293</strain>
    </source>
</reference>
<accession>Q4WPE9</accession>
<gene>
    <name type="primary">prp28</name>
    <name type="ORF">AFUA_4G09020</name>
</gene>
<dbReference type="EC" id="3.6.4.13"/>
<dbReference type="EMBL" id="AAHF01000005">
    <property type="protein sequence ID" value="EAL89885.1"/>
    <property type="molecule type" value="Genomic_DNA"/>
</dbReference>
<dbReference type="RefSeq" id="XP_751923.1">
    <property type="nucleotide sequence ID" value="XM_746830.1"/>
</dbReference>
<dbReference type="SMR" id="Q4WPE9"/>
<dbReference type="FunCoup" id="Q4WPE9">
    <property type="interactions" value="905"/>
</dbReference>
<dbReference type="STRING" id="330879.Q4WPE9"/>
<dbReference type="EnsemblFungi" id="EAL89885">
    <property type="protein sequence ID" value="EAL89885"/>
    <property type="gene ID" value="AFUA_4G09020"/>
</dbReference>
<dbReference type="GeneID" id="3509452"/>
<dbReference type="KEGG" id="afm:AFUA_4G09020"/>
<dbReference type="VEuPathDB" id="FungiDB:Afu4g09020"/>
<dbReference type="eggNOG" id="KOG0333">
    <property type="taxonomic scope" value="Eukaryota"/>
</dbReference>
<dbReference type="HOGENOM" id="CLU_003041_11_3_1"/>
<dbReference type="InParanoid" id="Q4WPE9"/>
<dbReference type="OMA" id="ARDIKHM"/>
<dbReference type="OrthoDB" id="196131at2759"/>
<dbReference type="Proteomes" id="UP000002530">
    <property type="component" value="Chromosome 4"/>
</dbReference>
<dbReference type="GO" id="GO:0071013">
    <property type="term" value="C:catalytic step 2 spliceosome"/>
    <property type="evidence" value="ECO:0000318"/>
    <property type="project" value="GO_Central"/>
</dbReference>
<dbReference type="GO" id="GO:0005737">
    <property type="term" value="C:cytoplasm"/>
    <property type="evidence" value="ECO:0007669"/>
    <property type="project" value="UniProtKB-SubCell"/>
</dbReference>
<dbReference type="GO" id="GO:0005524">
    <property type="term" value="F:ATP binding"/>
    <property type="evidence" value="ECO:0007669"/>
    <property type="project" value="UniProtKB-KW"/>
</dbReference>
<dbReference type="GO" id="GO:0016887">
    <property type="term" value="F:ATP hydrolysis activity"/>
    <property type="evidence" value="ECO:0007669"/>
    <property type="project" value="RHEA"/>
</dbReference>
<dbReference type="GO" id="GO:0003729">
    <property type="term" value="F:mRNA binding"/>
    <property type="evidence" value="ECO:0000318"/>
    <property type="project" value="GO_Central"/>
</dbReference>
<dbReference type="GO" id="GO:0003724">
    <property type="term" value="F:RNA helicase activity"/>
    <property type="evidence" value="ECO:0007669"/>
    <property type="project" value="UniProtKB-EC"/>
</dbReference>
<dbReference type="GO" id="GO:0000398">
    <property type="term" value="P:mRNA splicing, via spliceosome"/>
    <property type="evidence" value="ECO:0000318"/>
    <property type="project" value="GO_Central"/>
</dbReference>
<dbReference type="CDD" id="cd17945">
    <property type="entry name" value="DEADc_DDX23"/>
    <property type="match status" value="1"/>
</dbReference>
<dbReference type="CDD" id="cd18787">
    <property type="entry name" value="SF2_C_DEAD"/>
    <property type="match status" value="1"/>
</dbReference>
<dbReference type="FunFam" id="3.40.50.300:FF:000322">
    <property type="entry name" value="probable ATP-dependent RNA helicase DDX23"/>
    <property type="match status" value="1"/>
</dbReference>
<dbReference type="Gene3D" id="3.40.50.300">
    <property type="entry name" value="P-loop containing nucleotide triphosphate hydrolases"/>
    <property type="match status" value="2"/>
</dbReference>
<dbReference type="InterPro" id="IPR011545">
    <property type="entry name" value="DEAD/DEAH_box_helicase_dom"/>
</dbReference>
<dbReference type="InterPro" id="IPR014001">
    <property type="entry name" value="Helicase_ATP-bd"/>
</dbReference>
<dbReference type="InterPro" id="IPR001650">
    <property type="entry name" value="Helicase_C-like"/>
</dbReference>
<dbReference type="InterPro" id="IPR027417">
    <property type="entry name" value="P-loop_NTPase"/>
</dbReference>
<dbReference type="InterPro" id="IPR000629">
    <property type="entry name" value="RNA-helicase_DEAD-box_CS"/>
</dbReference>
<dbReference type="InterPro" id="IPR014014">
    <property type="entry name" value="RNA_helicase_DEAD_Q_motif"/>
</dbReference>
<dbReference type="PANTHER" id="PTHR47958">
    <property type="entry name" value="ATP-DEPENDENT RNA HELICASE DBP3"/>
    <property type="match status" value="1"/>
</dbReference>
<dbReference type="Pfam" id="PF25430">
    <property type="entry name" value="DDX23"/>
    <property type="match status" value="1"/>
</dbReference>
<dbReference type="Pfam" id="PF00270">
    <property type="entry name" value="DEAD"/>
    <property type="match status" value="1"/>
</dbReference>
<dbReference type="Pfam" id="PF00271">
    <property type="entry name" value="Helicase_C"/>
    <property type="match status" value="1"/>
</dbReference>
<dbReference type="SMART" id="SM00487">
    <property type="entry name" value="DEXDc"/>
    <property type="match status" value="1"/>
</dbReference>
<dbReference type="SMART" id="SM00490">
    <property type="entry name" value="HELICc"/>
    <property type="match status" value="1"/>
</dbReference>
<dbReference type="SUPFAM" id="SSF52540">
    <property type="entry name" value="P-loop containing nucleoside triphosphate hydrolases"/>
    <property type="match status" value="1"/>
</dbReference>
<dbReference type="PROSITE" id="PS00039">
    <property type="entry name" value="DEAD_ATP_HELICASE"/>
    <property type="match status" value="1"/>
</dbReference>
<dbReference type="PROSITE" id="PS51192">
    <property type="entry name" value="HELICASE_ATP_BIND_1"/>
    <property type="match status" value="1"/>
</dbReference>
<dbReference type="PROSITE" id="PS51194">
    <property type="entry name" value="HELICASE_CTER"/>
    <property type="match status" value="1"/>
</dbReference>
<dbReference type="PROSITE" id="PS51195">
    <property type="entry name" value="Q_MOTIF"/>
    <property type="match status" value="1"/>
</dbReference>